<evidence type="ECO:0000255" key="1">
    <source>
        <dbReference type="HAMAP-Rule" id="MF_00373"/>
    </source>
</evidence>
<evidence type="ECO:0000305" key="2"/>
<protein>
    <recommendedName>
        <fullName evidence="1">Large ribosomal subunit protein bL28</fullName>
    </recommendedName>
    <alternativeName>
        <fullName evidence="2">50S ribosomal protein L28</fullName>
    </alternativeName>
</protein>
<gene>
    <name evidence="1" type="primary">rpmB</name>
    <name type="ordered locus">LJ_1533</name>
</gene>
<sequence length="61" mass="6958">MAKDIITGRKTVFGNKRSKALNSVRRSWKPNLQKVRILVDGKPKRVWVSARALKSGKVKRV</sequence>
<dbReference type="EMBL" id="AE017198">
    <property type="protein sequence ID" value="AAS09301.1"/>
    <property type="molecule type" value="Genomic_DNA"/>
</dbReference>
<dbReference type="RefSeq" id="WP_004895337.1">
    <property type="nucleotide sequence ID" value="NC_005362.1"/>
</dbReference>
<dbReference type="SMR" id="Q74IN6"/>
<dbReference type="GeneID" id="83570140"/>
<dbReference type="KEGG" id="ljo:LJ_1533"/>
<dbReference type="eggNOG" id="COG0227">
    <property type="taxonomic scope" value="Bacteria"/>
</dbReference>
<dbReference type="HOGENOM" id="CLU_064548_7_1_9"/>
<dbReference type="Proteomes" id="UP000000581">
    <property type="component" value="Chromosome"/>
</dbReference>
<dbReference type="GO" id="GO:1990904">
    <property type="term" value="C:ribonucleoprotein complex"/>
    <property type="evidence" value="ECO:0007669"/>
    <property type="project" value="UniProtKB-KW"/>
</dbReference>
<dbReference type="GO" id="GO:0005840">
    <property type="term" value="C:ribosome"/>
    <property type="evidence" value="ECO:0007669"/>
    <property type="project" value="UniProtKB-KW"/>
</dbReference>
<dbReference type="GO" id="GO:0003735">
    <property type="term" value="F:structural constituent of ribosome"/>
    <property type="evidence" value="ECO:0007669"/>
    <property type="project" value="InterPro"/>
</dbReference>
<dbReference type="GO" id="GO:0006412">
    <property type="term" value="P:translation"/>
    <property type="evidence" value="ECO:0007669"/>
    <property type="project" value="UniProtKB-UniRule"/>
</dbReference>
<dbReference type="Gene3D" id="2.30.170.40">
    <property type="entry name" value="Ribosomal protein L28/L24"/>
    <property type="match status" value="1"/>
</dbReference>
<dbReference type="HAMAP" id="MF_00373">
    <property type="entry name" value="Ribosomal_bL28"/>
    <property type="match status" value="1"/>
</dbReference>
<dbReference type="InterPro" id="IPR050096">
    <property type="entry name" value="Bacterial_rp_bL28"/>
</dbReference>
<dbReference type="InterPro" id="IPR026569">
    <property type="entry name" value="Ribosomal_bL28"/>
</dbReference>
<dbReference type="InterPro" id="IPR034704">
    <property type="entry name" value="Ribosomal_bL28/bL31-like_sf"/>
</dbReference>
<dbReference type="InterPro" id="IPR001383">
    <property type="entry name" value="Ribosomal_bL28_bact-type"/>
</dbReference>
<dbReference type="InterPro" id="IPR037147">
    <property type="entry name" value="Ribosomal_bL28_sf"/>
</dbReference>
<dbReference type="NCBIfam" id="TIGR00009">
    <property type="entry name" value="L28"/>
    <property type="match status" value="1"/>
</dbReference>
<dbReference type="PANTHER" id="PTHR39080">
    <property type="entry name" value="50S RIBOSOMAL PROTEIN L28"/>
    <property type="match status" value="1"/>
</dbReference>
<dbReference type="PANTHER" id="PTHR39080:SF1">
    <property type="entry name" value="LARGE RIBOSOMAL SUBUNIT PROTEIN BL28A"/>
    <property type="match status" value="1"/>
</dbReference>
<dbReference type="Pfam" id="PF00830">
    <property type="entry name" value="Ribosomal_L28"/>
    <property type="match status" value="1"/>
</dbReference>
<dbReference type="SUPFAM" id="SSF143800">
    <property type="entry name" value="L28p-like"/>
    <property type="match status" value="1"/>
</dbReference>
<organism>
    <name type="scientific">Lactobacillus johnsonii (strain CNCM I-12250 / La1 / NCC 533)</name>
    <dbReference type="NCBI Taxonomy" id="257314"/>
    <lineage>
        <taxon>Bacteria</taxon>
        <taxon>Bacillati</taxon>
        <taxon>Bacillota</taxon>
        <taxon>Bacilli</taxon>
        <taxon>Lactobacillales</taxon>
        <taxon>Lactobacillaceae</taxon>
        <taxon>Lactobacillus</taxon>
    </lineage>
</organism>
<comment type="similarity">
    <text evidence="1">Belongs to the bacterial ribosomal protein bL28 family.</text>
</comment>
<proteinExistence type="inferred from homology"/>
<reference key="1">
    <citation type="journal article" date="2004" name="Proc. Natl. Acad. Sci. U.S.A.">
        <title>The genome sequence of the probiotic intestinal bacterium Lactobacillus johnsonii NCC 533.</title>
        <authorList>
            <person name="Pridmore R.D."/>
            <person name="Berger B."/>
            <person name="Desiere F."/>
            <person name="Vilanova D."/>
            <person name="Barretto C."/>
            <person name="Pittet A.-C."/>
            <person name="Zwahlen M.-C."/>
            <person name="Rouvet M."/>
            <person name="Altermann E."/>
            <person name="Barrangou R."/>
            <person name="Mollet B."/>
            <person name="Mercenier A."/>
            <person name="Klaenhammer T."/>
            <person name="Arigoni F."/>
            <person name="Schell M.A."/>
        </authorList>
    </citation>
    <scope>NUCLEOTIDE SEQUENCE [LARGE SCALE GENOMIC DNA]</scope>
    <source>
        <strain>CNCM I-1225 / La1 / NCC 533</strain>
    </source>
</reference>
<feature type="chain" id="PRO_0000178486" description="Large ribosomal subunit protein bL28">
    <location>
        <begin position="1"/>
        <end position="61"/>
    </location>
</feature>
<name>RL28_LACJO</name>
<keyword id="KW-0687">Ribonucleoprotein</keyword>
<keyword id="KW-0689">Ribosomal protein</keyword>
<accession>Q74IN6</accession>